<sequence length="475" mass="50884">MKVTLPDFERAGVMVVGDVMLDRYWYGPTSRISPEAPVPVVKVETIEERPGGAANVAMNIASLGASSRLVGLTGIDDAARALSQSLAQVNVKCDFVSVPTHPTITKLRVLSRNQQLIRLDFEEGFDGVDPEPLHERINQALGQIGALVLSDYAKGALASVQQMIQLARKAGVPVLIDPKGTDFERYRGATLLTPNLSEFEAVAGKCKTEQDIVERGMKIIADFDLSALLVTRSEQGMTLLQPGKAPFHLPTQAQEVYDVTGAGDTVIGVLAATLASGNSLEEACFFANAAAGVVVGKLGTSTVSPVELENAVRGRAETGFGVMSEAALKEAVLAARKRGEKVVMTNGVFDILHAGHVSYLANARKLGDRLIVAVNSDASTRRLKGDTRPVNPQEQRMIVLAALEAVDWVVPFEEDTPQRLISEILPDLLVKGGDYKPEDIAGSKEVWANGGDVMVLNFEDGCSTTNIIKKIQKNS</sequence>
<keyword id="KW-0067">ATP-binding</keyword>
<keyword id="KW-0119">Carbohydrate metabolism</keyword>
<keyword id="KW-0418">Kinase</keyword>
<keyword id="KW-0511">Multifunctional enzyme</keyword>
<keyword id="KW-0547">Nucleotide-binding</keyword>
<keyword id="KW-0548">Nucleotidyltransferase</keyword>
<keyword id="KW-1185">Reference proteome</keyword>
<keyword id="KW-0808">Transferase</keyword>
<name>HLDE_CROS8</name>
<dbReference type="EC" id="2.7.1.167" evidence="1"/>
<dbReference type="EC" id="2.7.7.70" evidence="1"/>
<dbReference type="EMBL" id="CP000783">
    <property type="protein sequence ID" value="ABU75664.1"/>
    <property type="molecule type" value="Genomic_DNA"/>
</dbReference>
<dbReference type="RefSeq" id="WP_004385601.1">
    <property type="nucleotide sequence ID" value="NC_009778.1"/>
</dbReference>
<dbReference type="SMR" id="A7MP93"/>
<dbReference type="GeneID" id="56733323"/>
<dbReference type="KEGG" id="esa:ESA_00366"/>
<dbReference type="HOGENOM" id="CLU_021150_2_1_6"/>
<dbReference type="UniPathway" id="UPA00356">
    <property type="reaction ID" value="UER00437"/>
</dbReference>
<dbReference type="UniPathway" id="UPA00356">
    <property type="reaction ID" value="UER00439"/>
</dbReference>
<dbReference type="Proteomes" id="UP000000260">
    <property type="component" value="Chromosome"/>
</dbReference>
<dbReference type="GO" id="GO:0005829">
    <property type="term" value="C:cytosol"/>
    <property type="evidence" value="ECO:0007669"/>
    <property type="project" value="TreeGrafter"/>
</dbReference>
<dbReference type="GO" id="GO:0005524">
    <property type="term" value="F:ATP binding"/>
    <property type="evidence" value="ECO:0007669"/>
    <property type="project" value="UniProtKB-UniRule"/>
</dbReference>
<dbReference type="GO" id="GO:0033785">
    <property type="term" value="F:heptose 7-phosphate kinase activity"/>
    <property type="evidence" value="ECO:0007669"/>
    <property type="project" value="UniProtKB-UniRule"/>
</dbReference>
<dbReference type="GO" id="GO:0033786">
    <property type="term" value="F:heptose-1-phosphate adenylyltransferase activity"/>
    <property type="evidence" value="ECO:0007669"/>
    <property type="project" value="UniProtKB-UniRule"/>
</dbReference>
<dbReference type="GO" id="GO:0016773">
    <property type="term" value="F:phosphotransferase activity, alcohol group as acceptor"/>
    <property type="evidence" value="ECO:0007669"/>
    <property type="project" value="InterPro"/>
</dbReference>
<dbReference type="GO" id="GO:0097171">
    <property type="term" value="P:ADP-L-glycero-beta-D-manno-heptose biosynthetic process"/>
    <property type="evidence" value="ECO:0007669"/>
    <property type="project" value="UniProtKB-UniPathway"/>
</dbReference>
<dbReference type="CDD" id="cd01172">
    <property type="entry name" value="RfaE_like"/>
    <property type="match status" value="1"/>
</dbReference>
<dbReference type="FunFam" id="3.40.1190.20:FF:000002">
    <property type="entry name" value="Bifunctional protein HldE"/>
    <property type="match status" value="1"/>
</dbReference>
<dbReference type="FunFam" id="3.40.50.620:FF:000028">
    <property type="entry name" value="Bifunctional protein HldE"/>
    <property type="match status" value="1"/>
</dbReference>
<dbReference type="Gene3D" id="3.40.1190.20">
    <property type="match status" value="1"/>
</dbReference>
<dbReference type="Gene3D" id="3.40.50.620">
    <property type="entry name" value="HUPs"/>
    <property type="match status" value="1"/>
</dbReference>
<dbReference type="HAMAP" id="MF_01603">
    <property type="entry name" value="HldE"/>
    <property type="match status" value="1"/>
</dbReference>
<dbReference type="InterPro" id="IPR023030">
    <property type="entry name" value="Bifunc_HldE"/>
</dbReference>
<dbReference type="InterPro" id="IPR002173">
    <property type="entry name" value="Carboh/pur_kinase_PfkB_CS"/>
</dbReference>
<dbReference type="InterPro" id="IPR004821">
    <property type="entry name" value="Cyt_trans-like"/>
</dbReference>
<dbReference type="InterPro" id="IPR011611">
    <property type="entry name" value="PfkB_dom"/>
</dbReference>
<dbReference type="InterPro" id="IPR011913">
    <property type="entry name" value="RfaE_dom_I"/>
</dbReference>
<dbReference type="InterPro" id="IPR011914">
    <property type="entry name" value="RfaE_dom_II"/>
</dbReference>
<dbReference type="InterPro" id="IPR029056">
    <property type="entry name" value="Ribokinase-like"/>
</dbReference>
<dbReference type="InterPro" id="IPR014729">
    <property type="entry name" value="Rossmann-like_a/b/a_fold"/>
</dbReference>
<dbReference type="NCBIfam" id="TIGR00125">
    <property type="entry name" value="cyt_tran_rel"/>
    <property type="match status" value="1"/>
</dbReference>
<dbReference type="NCBIfam" id="NF008454">
    <property type="entry name" value="PRK11316.1"/>
    <property type="match status" value="1"/>
</dbReference>
<dbReference type="NCBIfam" id="TIGR02198">
    <property type="entry name" value="rfaE_dom_I"/>
    <property type="match status" value="1"/>
</dbReference>
<dbReference type="NCBIfam" id="TIGR02199">
    <property type="entry name" value="rfaE_dom_II"/>
    <property type="match status" value="1"/>
</dbReference>
<dbReference type="PANTHER" id="PTHR46969">
    <property type="entry name" value="BIFUNCTIONAL PROTEIN HLDE"/>
    <property type="match status" value="1"/>
</dbReference>
<dbReference type="PANTHER" id="PTHR46969:SF1">
    <property type="entry name" value="BIFUNCTIONAL PROTEIN HLDE"/>
    <property type="match status" value="1"/>
</dbReference>
<dbReference type="Pfam" id="PF01467">
    <property type="entry name" value="CTP_transf_like"/>
    <property type="match status" value="1"/>
</dbReference>
<dbReference type="Pfam" id="PF00294">
    <property type="entry name" value="PfkB"/>
    <property type="match status" value="1"/>
</dbReference>
<dbReference type="SUPFAM" id="SSF52374">
    <property type="entry name" value="Nucleotidylyl transferase"/>
    <property type="match status" value="1"/>
</dbReference>
<dbReference type="SUPFAM" id="SSF53613">
    <property type="entry name" value="Ribokinase-like"/>
    <property type="match status" value="1"/>
</dbReference>
<dbReference type="PROSITE" id="PS00583">
    <property type="entry name" value="PFKB_KINASES_1"/>
    <property type="match status" value="1"/>
</dbReference>
<evidence type="ECO:0000255" key="1">
    <source>
        <dbReference type="HAMAP-Rule" id="MF_01603"/>
    </source>
</evidence>
<gene>
    <name evidence="1" type="primary">hldE</name>
    <name type="ordered locus">ESA_00366</name>
</gene>
<reference key="1">
    <citation type="journal article" date="2010" name="PLoS ONE">
        <title>Genome sequence of Cronobacter sakazakii BAA-894 and comparative genomic hybridization analysis with other Cronobacter species.</title>
        <authorList>
            <person name="Kucerova E."/>
            <person name="Clifton S.W."/>
            <person name="Xia X.Q."/>
            <person name="Long F."/>
            <person name="Porwollik S."/>
            <person name="Fulton L."/>
            <person name="Fronick C."/>
            <person name="Minx P."/>
            <person name="Kyung K."/>
            <person name="Warren W."/>
            <person name="Fulton R."/>
            <person name="Feng D."/>
            <person name="Wollam A."/>
            <person name="Shah N."/>
            <person name="Bhonagiri V."/>
            <person name="Nash W.E."/>
            <person name="Hallsworth-Pepin K."/>
            <person name="Wilson R.K."/>
            <person name="McClelland M."/>
            <person name="Forsythe S.J."/>
        </authorList>
    </citation>
    <scope>NUCLEOTIDE SEQUENCE [LARGE SCALE GENOMIC DNA]</scope>
    <source>
        <strain>ATCC BAA-894</strain>
    </source>
</reference>
<protein>
    <recommendedName>
        <fullName evidence="1">Bifunctional protein HldE</fullName>
    </recommendedName>
    <domain>
        <recommendedName>
            <fullName evidence="1">D-beta-D-heptose 7-phosphate kinase</fullName>
            <ecNumber evidence="1">2.7.1.167</ecNumber>
        </recommendedName>
        <alternativeName>
            <fullName evidence="1">D-beta-D-heptose 7-phosphotransferase</fullName>
        </alternativeName>
        <alternativeName>
            <fullName evidence="1">D-glycero-beta-D-manno-heptose-7-phosphate kinase</fullName>
        </alternativeName>
    </domain>
    <domain>
        <recommendedName>
            <fullName evidence="1">D-beta-D-heptose 1-phosphate adenylyltransferase</fullName>
            <ecNumber evidence="1">2.7.7.70</ecNumber>
        </recommendedName>
        <alternativeName>
            <fullName evidence="1">D-glycero-beta-D-manno-heptose 1-phosphate adenylyltransferase</fullName>
        </alternativeName>
    </domain>
</protein>
<proteinExistence type="inferred from homology"/>
<feature type="chain" id="PRO_0000323486" description="Bifunctional protein HldE">
    <location>
        <begin position="1"/>
        <end position="475"/>
    </location>
</feature>
<feature type="region of interest" description="Ribokinase">
    <location>
        <begin position="1"/>
        <end position="318"/>
    </location>
</feature>
<feature type="region of interest" description="Cytidylyltransferase">
    <location>
        <begin position="344"/>
        <end position="475"/>
    </location>
</feature>
<feature type="active site" evidence="1">
    <location>
        <position position="264"/>
    </location>
</feature>
<feature type="binding site" evidence="1">
    <location>
        <begin position="195"/>
        <end position="198"/>
    </location>
    <ligand>
        <name>ATP</name>
        <dbReference type="ChEBI" id="CHEBI:30616"/>
    </ligand>
</feature>
<accession>A7MP93</accession>
<comment type="function">
    <text evidence="1">Catalyzes the phosphorylation of D-glycero-D-manno-heptose 7-phosphate at the C-1 position to selectively form D-glycero-beta-D-manno-heptose-1,7-bisphosphate.</text>
</comment>
<comment type="function">
    <text evidence="1">Catalyzes the ADP transfer from ATP to D-glycero-beta-D-manno-heptose 1-phosphate, yielding ADP-D-glycero-beta-D-manno-heptose.</text>
</comment>
<comment type="catalytic activity">
    <reaction evidence="1">
        <text>D-glycero-beta-D-manno-heptose 7-phosphate + ATP = D-glycero-beta-D-manno-heptose 1,7-bisphosphate + ADP + H(+)</text>
        <dbReference type="Rhea" id="RHEA:27473"/>
        <dbReference type="ChEBI" id="CHEBI:15378"/>
        <dbReference type="ChEBI" id="CHEBI:30616"/>
        <dbReference type="ChEBI" id="CHEBI:60204"/>
        <dbReference type="ChEBI" id="CHEBI:60208"/>
        <dbReference type="ChEBI" id="CHEBI:456216"/>
        <dbReference type="EC" id="2.7.1.167"/>
    </reaction>
</comment>
<comment type="catalytic activity">
    <reaction evidence="1">
        <text>D-glycero-beta-D-manno-heptose 1-phosphate + ATP + H(+) = ADP-D-glycero-beta-D-manno-heptose + diphosphate</text>
        <dbReference type="Rhea" id="RHEA:27465"/>
        <dbReference type="ChEBI" id="CHEBI:15378"/>
        <dbReference type="ChEBI" id="CHEBI:30616"/>
        <dbReference type="ChEBI" id="CHEBI:33019"/>
        <dbReference type="ChEBI" id="CHEBI:59967"/>
        <dbReference type="ChEBI" id="CHEBI:61593"/>
        <dbReference type="EC" id="2.7.7.70"/>
    </reaction>
</comment>
<comment type="pathway">
    <text evidence="1">Nucleotide-sugar biosynthesis; ADP-L-glycero-beta-D-manno-heptose biosynthesis; ADP-L-glycero-beta-D-manno-heptose from D-glycero-beta-D-manno-heptose 7-phosphate: step 1/4.</text>
</comment>
<comment type="pathway">
    <text evidence="1">Nucleotide-sugar biosynthesis; ADP-L-glycero-beta-D-manno-heptose biosynthesis; ADP-L-glycero-beta-D-manno-heptose from D-glycero-beta-D-manno-heptose 7-phosphate: step 3/4.</text>
</comment>
<comment type="subunit">
    <text evidence="1">Homodimer.</text>
</comment>
<comment type="similarity">
    <text evidence="1">In the N-terminal section; belongs to the carbohydrate kinase PfkB family.</text>
</comment>
<comment type="similarity">
    <text evidence="1">In the C-terminal section; belongs to the cytidylyltransferase family.</text>
</comment>
<organism>
    <name type="scientific">Cronobacter sakazakii (strain ATCC BAA-894)</name>
    <name type="common">Enterobacter sakazakii</name>
    <dbReference type="NCBI Taxonomy" id="290339"/>
    <lineage>
        <taxon>Bacteria</taxon>
        <taxon>Pseudomonadati</taxon>
        <taxon>Pseudomonadota</taxon>
        <taxon>Gammaproteobacteria</taxon>
        <taxon>Enterobacterales</taxon>
        <taxon>Enterobacteriaceae</taxon>
        <taxon>Cronobacter</taxon>
    </lineage>
</organism>